<reference key="1">
    <citation type="journal article" date="1992" name="Science">
        <title>Neurexins: synaptic cell surface proteins related to the alpha-latrotoxin receptor and laminin.</title>
        <authorList>
            <person name="Ushkaryov Y.A."/>
            <person name="Petrenko A.G."/>
            <person name="Geppert M."/>
            <person name="Suedhof T.C."/>
        </authorList>
    </citation>
    <scope>NUCLEOTIDE SEQUENCE [MRNA] (ISOFORMS 1A AND 10A)</scope>
    <scope>VARIANT LEU-434</scope>
    <scope>ALTERNATIVE SPLICING</scope>
    <source>
        <strain>Sprague-Dawley</strain>
        <tissue>Brain</tissue>
    </source>
</reference>
<reference key="2">
    <citation type="journal article" date="2004" name="Nature">
        <title>Genome sequence of the Brown Norway rat yields insights into mammalian evolution.</title>
        <authorList>
            <person name="Gibbs R.A."/>
            <person name="Weinstock G.M."/>
            <person name="Metzker M.L."/>
            <person name="Muzny D.M."/>
            <person name="Sodergren E.J."/>
            <person name="Scherer S."/>
            <person name="Scott G."/>
            <person name="Steffen D."/>
            <person name="Worley K.C."/>
            <person name="Burch P.E."/>
            <person name="Okwuonu G."/>
            <person name="Hines S."/>
            <person name="Lewis L."/>
            <person name="Deramo C."/>
            <person name="Delgado O."/>
            <person name="Dugan-Rocha S."/>
            <person name="Miner G."/>
            <person name="Morgan M."/>
            <person name="Hawes A."/>
            <person name="Gill R."/>
            <person name="Holt R.A."/>
            <person name="Adams M.D."/>
            <person name="Amanatides P.G."/>
            <person name="Baden-Tillson H."/>
            <person name="Barnstead M."/>
            <person name="Chin S."/>
            <person name="Evans C.A."/>
            <person name="Ferriera S."/>
            <person name="Fosler C."/>
            <person name="Glodek A."/>
            <person name="Gu Z."/>
            <person name="Jennings D."/>
            <person name="Kraft C.L."/>
            <person name="Nguyen T."/>
            <person name="Pfannkoch C.M."/>
            <person name="Sitter C."/>
            <person name="Sutton G.G."/>
            <person name="Venter J.C."/>
            <person name="Woodage T."/>
            <person name="Smith D."/>
            <person name="Lee H.-M."/>
            <person name="Gustafson E."/>
            <person name="Cahill P."/>
            <person name="Kana A."/>
            <person name="Doucette-Stamm L."/>
            <person name="Weinstock K."/>
            <person name="Fechtel K."/>
            <person name="Weiss R.B."/>
            <person name="Dunn D.M."/>
            <person name="Green E.D."/>
            <person name="Blakesley R.W."/>
            <person name="Bouffard G.G."/>
            <person name="De Jong P.J."/>
            <person name="Osoegawa K."/>
            <person name="Zhu B."/>
            <person name="Marra M."/>
            <person name="Schein J."/>
            <person name="Bosdet I."/>
            <person name="Fjell C."/>
            <person name="Jones S."/>
            <person name="Krzywinski M."/>
            <person name="Mathewson C."/>
            <person name="Siddiqui A."/>
            <person name="Wye N."/>
            <person name="McPherson J."/>
            <person name="Zhao S."/>
            <person name="Fraser C.M."/>
            <person name="Shetty J."/>
            <person name="Shatsman S."/>
            <person name="Geer K."/>
            <person name="Chen Y."/>
            <person name="Abramzon S."/>
            <person name="Nierman W.C."/>
            <person name="Havlak P.H."/>
            <person name="Chen R."/>
            <person name="Durbin K.J."/>
            <person name="Egan A."/>
            <person name="Ren Y."/>
            <person name="Song X.-Z."/>
            <person name="Li B."/>
            <person name="Liu Y."/>
            <person name="Qin X."/>
            <person name="Cawley S."/>
            <person name="Cooney A.J."/>
            <person name="D'Souza L.M."/>
            <person name="Martin K."/>
            <person name="Wu J.Q."/>
            <person name="Gonzalez-Garay M.L."/>
            <person name="Jackson A.R."/>
            <person name="Kalafus K.J."/>
            <person name="McLeod M.P."/>
            <person name="Milosavljevic A."/>
            <person name="Virk D."/>
            <person name="Volkov A."/>
            <person name="Wheeler D.A."/>
            <person name="Zhang Z."/>
            <person name="Bailey J.A."/>
            <person name="Eichler E.E."/>
            <person name="Tuzun E."/>
            <person name="Birney E."/>
            <person name="Mongin E."/>
            <person name="Ureta-Vidal A."/>
            <person name="Woodwark C."/>
            <person name="Zdobnov E."/>
            <person name="Bork P."/>
            <person name="Suyama M."/>
            <person name="Torrents D."/>
            <person name="Alexandersson M."/>
            <person name="Trask B.J."/>
            <person name="Young J.M."/>
            <person name="Huang H."/>
            <person name="Wang H."/>
            <person name="Xing H."/>
            <person name="Daniels S."/>
            <person name="Gietzen D."/>
            <person name="Schmidt J."/>
            <person name="Stevens K."/>
            <person name="Vitt U."/>
            <person name="Wingrove J."/>
            <person name="Camara F."/>
            <person name="Mar Alba M."/>
            <person name="Abril J.F."/>
            <person name="Guigo R."/>
            <person name="Smit A."/>
            <person name="Dubchak I."/>
            <person name="Rubin E.M."/>
            <person name="Couronne O."/>
            <person name="Poliakov A."/>
            <person name="Huebner N."/>
            <person name="Ganten D."/>
            <person name="Goesele C."/>
            <person name="Hummel O."/>
            <person name="Kreitler T."/>
            <person name="Lee Y.-A."/>
            <person name="Monti J."/>
            <person name="Schulz H."/>
            <person name="Zimdahl H."/>
            <person name="Himmelbauer H."/>
            <person name="Lehrach H."/>
            <person name="Jacob H.J."/>
            <person name="Bromberg S."/>
            <person name="Gullings-Handley J."/>
            <person name="Jensen-Seaman M.I."/>
            <person name="Kwitek A.E."/>
            <person name="Lazar J."/>
            <person name="Pasko D."/>
            <person name="Tonellato P.J."/>
            <person name="Twigger S."/>
            <person name="Ponting C.P."/>
            <person name="Duarte J.M."/>
            <person name="Rice S."/>
            <person name="Goodstadt L."/>
            <person name="Beatson S.A."/>
            <person name="Emes R.D."/>
            <person name="Winter E.E."/>
            <person name="Webber C."/>
            <person name="Brandt P."/>
            <person name="Nyakatura G."/>
            <person name="Adetobi M."/>
            <person name="Chiaromonte F."/>
            <person name="Elnitski L."/>
            <person name="Eswara P."/>
            <person name="Hardison R.C."/>
            <person name="Hou M."/>
            <person name="Kolbe D."/>
            <person name="Makova K."/>
            <person name="Miller W."/>
            <person name="Nekrutenko A."/>
            <person name="Riemer C."/>
            <person name="Schwartz S."/>
            <person name="Taylor J."/>
            <person name="Yang S."/>
            <person name="Zhang Y."/>
            <person name="Lindpaintner K."/>
            <person name="Andrews T.D."/>
            <person name="Caccamo M."/>
            <person name="Clamp M."/>
            <person name="Clarke L."/>
            <person name="Curwen V."/>
            <person name="Durbin R.M."/>
            <person name="Eyras E."/>
            <person name="Searle S.M."/>
            <person name="Cooper G.M."/>
            <person name="Batzoglou S."/>
            <person name="Brudno M."/>
            <person name="Sidow A."/>
            <person name="Stone E.A."/>
            <person name="Payseur B.A."/>
            <person name="Bourque G."/>
            <person name="Lopez-Otin C."/>
            <person name="Puente X.S."/>
            <person name="Chakrabarti K."/>
            <person name="Chatterji S."/>
            <person name="Dewey C."/>
            <person name="Pachter L."/>
            <person name="Bray N."/>
            <person name="Yap V.B."/>
            <person name="Caspi A."/>
            <person name="Tesler G."/>
            <person name="Pevzner P.A."/>
            <person name="Haussler D."/>
            <person name="Roskin K.M."/>
            <person name="Baertsch R."/>
            <person name="Clawson H."/>
            <person name="Furey T.S."/>
            <person name="Hinrichs A.S."/>
            <person name="Karolchik D."/>
            <person name="Kent W.J."/>
            <person name="Rosenbloom K.R."/>
            <person name="Trumbower H."/>
            <person name="Weirauch M."/>
            <person name="Cooper D.N."/>
            <person name="Stenson P.D."/>
            <person name="Ma B."/>
            <person name="Brent M."/>
            <person name="Arumugam M."/>
            <person name="Shteynberg D."/>
            <person name="Copley R.R."/>
            <person name="Taylor M.S."/>
            <person name="Riethman H."/>
            <person name="Mudunuri U."/>
            <person name="Peterson J."/>
            <person name="Guyer M."/>
            <person name="Felsenfeld A."/>
            <person name="Old S."/>
            <person name="Mockrin S."/>
            <person name="Collins F.S."/>
        </authorList>
    </citation>
    <scope>NUCLEOTIDE SEQUENCE [LARGE SCALE GENOMIC DNA]</scope>
    <source>
        <strain>Brown Norway</strain>
    </source>
</reference>
<reference key="3">
    <citation type="journal article" date="1995" name="Neuron">
        <title>Cartography of neurexins: more than 1000 isoforms generated by alternative splicing and expressed in distinct subsets of neurons.</title>
        <authorList>
            <person name="Ullrich B."/>
            <person name="Ushkaryov Y.A."/>
            <person name="Suedhof T.C."/>
        </authorList>
    </citation>
    <scope>ALTERNATIVE SPLICING</scope>
</reference>
<reference key="4">
    <citation type="journal article" date="1998" name="J. Biol. Chem.">
        <title>Neurexophilin binding to alpha-neurexins. A single LNS domain functions as an independently folding ligand-binding unit.</title>
        <authorList>
            <person name="Missler M."/>
            <person name="Hammer R.E."/>
            <person name="Suedhof T.C."/>
        </authorList>
    </citation>
    <scope>INTERACTION WITH NXPH1</scope>
</reference>
<reference key="5">
    <citation type="journal article" date="1998" name="Mol. Cell. Neurosci.">
        <title>CIPP, a novel multivalent PDZ domain protein, selectively interacts with Kir4.0 family members, NMDA receptor subunits, neurexins, and neuroligins.</title>
        <authorList>
            <person name="Kurschner C."/>
            <person name="Mermelstein P.G."/>
            <person name="Holden W.T."/>
            <person name="Surmeier D.J."/>
        </authorList>
    </citation>
    <scope>INTERACTION WITH PATJ</scope>
</reference>
<reference key="6">
    <citation type="journal article" date="2001" name="J. Cell Biol.">
        <title>A stoichiometric complex of neurexins and dystroglycan in brain.</title>
        <authorList>
            <person name="Sugita S."/>
            <person name="Saito F."/>
            <person name="Tang J."/>
            <person name="Satz J."/>
            <person name="Campbell K."/>
            <person name="Suedhof T.C."/>
        </authorList>
    </citation>
    <scope>INTERACTION WITH ALPHA-DYSTROGLYCAN</scope>
</reference>
<dbReference type="EMBL" id="M96376">
    <property type="protein sequence ID" value="AAA41706.1"/>
    <property type="molecule type" value="mRNA"/>
</dbReference>
<dbReference type="EMBL" id="M96376">
    <property type="protein sequence ID" value="AAA41707.1"/>
    <property type="molecule type" value="mRNA"/>
</dbReference>
<dbReference type="EMBL" id="AABR03000676">
    <property type="status" value="NOT_ANNOTATED_CDS"/>
    <property type="molecule type" value="Genomic_DNA"/>
</dbReference>
<dbReference type="EMBL" id="AABR03002856">
    <property type="status" value="NOT_ANNOTATED_CDS"/>
    <property type="molecule type" value="Genomic_DNA"/>
</dbReference>
<dbReference type="EMBL" id="AABR03004066">
    <property type="status" value="NOT_ANNOTATED_CDS"/>
    <property type="molecule type" value="Genomic_DNA"/>
</dbReference>
<dbReference type="EMBL" id="AABR03004601">
    <property type="status" value="NOT_ANNOTATED_CDS"/>
    <property type="molecule type" value="Genomic_DNA"/>
</dbReference>
<dbReference type="EMBL" id="AABR03004809">
    <property type="status" value="NOT_ANNOTATED_CDS"/>
    <property type="molecule type" value="Genomic_DNA"/>
</dbReference>
<dbReference type="EMBL" id="AABR03005995">
    <property type="status" value="NOT_ANNOTATED_CDS"/>
    <property type="molecule type" value="Genomic_DNA"/>
</dbReference>
<dbReference type="EMBL" id="AABR03006603">
    <property type="status" value="NOT_ANNOTATED_CDS"/>
    <property type="molecule type" value="Genomic_DNA"/>
</dbReference>
<dbReference type="EMBL" id="AABR03006786">
    <property type="status" value="NOT_ANNOTATED_CDS"/>
    <property type="molecule type" value="Genomic_DNA"/>
</dbReference>
<dbReference type="EMBL" id="AABR03008290">
    <property type="status" value="NOT_ANNOTATED_CDS"/>
    <property type="molecule type" value="Genomic_DNA"/>
</dbReference>
<dbReference type="EMBL" id="AABR03009435">
    <property type="status" value="NOT_ANNOTATED_CDS"/>
    <property type="molecule type" value="Genomic_DNA"/>
</dbReference>
<dbReference type="PIR" id="C40228">
    <property type="entry name" value="C40228"/>
</dbReference>
<dbReference type="RefSeq" id="NP_446298.1">
    <property type="nucleotide sequence ID" value="NM_053846.1"/>
</dbReference>
<dbReference type="SMR" id="Q63374"/>
<dbReference type="BioGRID" id="250509">
    <property type="interactions" value="4"/>
</dbReference>
<dbReference type="FunCoup" id="Q63374">
    <property type="interactions" value="1875"/>
</dbReference>
<dbReference type="IntAct" id="Q63374">
    <property type="interactions" value="6"/>
</dbReference>
<dbReference type="MINT" id="Q63374"/>
<dbReference type="STRING" id="10116.ENSRNOP00000029449"/>
<dbReference type="GlyCosmos" id="Q63374">
    <property type="glycosylation" value="4 sites, No reported glycans"/>
</dbReference>
<dbReference type="GlyGen" id="Q63374">
    <property type="glycosylation" value="5 sites"/>
</dbReference>
<dbReference type="iPTMnet" id="Q63374"/>
<dbReference type="PhosphoSitePlus" id="Q63374"/>
<dbReference type="PaxDb" id="10116-ENSRNOP00000063600"/>
<dbReference type="GeneID" id="116595"/>
<dbReference type="KEGG" id="rno:116595"/>
<dbReference type="AGR" id="RGD:620211"/>
<dbReference type="CTD" id="9379"/>
<dbReference type="RGD" id="620211">
    <property type="gene designation" value="Nrxn2"/>
</dbReference>
<dbReference type="eggNOG" id="KOG3514">
    <property type="taxonomic scope" value="Eukaryota"/>
</dbReference>
<dbReference type="InParanoid" id="Q63374"/>
<dbReference type="Reactome" id="R-RNO-6794361">
    <property type="pathway name" value="Neurexins and neuroligins"/>
</dbReference>
<dbReference type="Proteomes" id="UP000002494">
    <property type="component" value="Unplaced"/>
</dbReference>
<dbReference type="GO" id="GO:0042995">
    <property type="term" value="C:cell projection"/>
    <property type="evidence" value="ECO:0007669"/>
    <property type="project" value="UniProtKB-KW"/>
</dbReference>
<dbReference type="GO" id="GO:0098978">
    <property type="term" value="C:glutamatergic synapse"/>
    <property type="evidence" value="ECO:0000266"/>
    <property type="project" value="RGD"/>
</dbReference>
<dbReference type="GO" id="GO:0042734">
    <property type="term" value="C:presynaptic membrane"/>
    <property type="evidence" value="ECO:0007669"/>
    <property type="project" value="UniProtKB-SubCell"/>
</dbReference>
<dbReference type="GO" id="GO:0032991">
    <property type="term" value="C:protein-containing complex"/>
    <property type="evidence" value="ECO:0000266"/>
    <property type="project" value="RGD"/>
</dbReference>
<dbReference type="GO" id="GO:0005246">
    <property type="term" value="F:calcium channel regulator activity"/>
    <property type="evidence" value="ECO:0000250"/>
    <property type="project" value="BHF-UCL"/>
</dbReference>
<dbReference type="GO" id="GO:0050839">
    <property type="term" value="F:cell adhesion molecule binding"/>
    <property type="evidence" value="ECO:0000250"/>
    <property type="project" value="BHF-UCL"/>
</dbReference>
<dbReference type="GO" id="GO:0046872">
    <property type="term" value="F:metal ion binding"/>
    <property type="evidence" value="ECO:0007669"/>
    <property type="project" value="UniProtKB-KW"/>
</dbReference>
<dbReference type="GO" id="GO:0097109">
    <property type="term" value="F:neuroligin family protein binding"/>
    <property type="evidence" value="ECO:0000250"/>
    <property type="project" value="BHF-UCL"/>
</dbReference>
<dbReference type="GO" id="GO:0004888">
    <property type="term" value="F:transmembrane signaling receptor activity"/>
    <property type="evidence" value="ECO:0000250"/>
    <property type="project" value="BHF-UCL"/>
</dbReference>
<dbReference type="GO" id="GO:0030534">
    <property type="term" value="P:adult behavior"/>
    <property type="evidence" value="ECO:0000266"/>
    <property type="project" value="RGD"/>
</dbReference>
<dbReference type="GO" id="GO:0007155">
    <property type="term" value="P:cell adhesion"/>
    <property type="evidence" value="ECO:0007669"/>
    <property type="project" value="UniProtKB-KW"/>
</dbReference>
<dbReference type="GO" id="GO:0007268">
    <property type="term" value="P:chemical synaptic transmission"/>
    <property type="evidence" value="ECO:0000250"/>
    <property type="project" value="BHF-UCL"/>
</dbReference>
<dbReference type="GO" id="GO:0097116">
    <property type="term" value="P:gephyrin clustering involved in postsynaptic density assembly"/>
    <property type="evidence" value="ECO:0000250"/>
    <property type="project" value="BHF-UCL"/>
</dbReference>
<dbReference type="GO" id="GO:0097118">
    <property type="term" value="P:neuroligin clustering involved in postsynaptic membrane assembly"/>
    <property type="evidence" value="ECO:0000250"/>
    <property type="project" value="BHF-UCL"/>
</dbReference>
<dbReference type="GO" id="GO:0007269">
    <property type="term" value="P:neurotransmitter secretion"/>
    <property type="evidence" value="ECO:0000250"/>
    <property type="project" value="BHF-UCL"/>
</dbReference>
<dbReference type="GO" id="GO:0097119">
    <property type="term" value="P:postsynaptic density protein 95 clustering"/>
    <property type="evidence" value="ECO:0000250"/>
    <property type="project" value="BHF-UCL"/>
</dbReference>
<dbReference type="GO" id="GO:0097104">
    <property type="term" value="P:postsynaptic membrane assembly"/>
    <property type="evidence" value="ECO:0000250"/>
    <property type="project" value="BHF-UCL"/>
</dbReference>
<dbReference type="GO" id="GO:0099171">
    <property type="term" value="P:presynaptic modulation of chemical synaptic transmission"/>
    <property type="evidence" value="ECO:0000266"/>
    <property type="project" value="RGD"/>
</dbReference>
<dbReference type="GO" id="GO:0150052">
    <property type="term" value="P:regulation of postsynapse assembly"/>
    <property type="evidence" value="ECO:0000266"/>
    <property type="project" value="RGD"/>
</dbReference>
<dbReference type="GO" id="GO:0007165">
    <property type="term" value="P:signal transduction"/>
    <property type="evidence" value="ECO:0000250"/>
    <property type="project" value="BHF-UCL"/>
</dbReference>
<dbReference type="GO" id="GO:0035176">
    <property type="term" value="P:social behavior"/>
    <property type="evidence" value="ECO:0000266"/>
    <property type="project" value="RGD"/>
</dbReference>
<dbReference type="GO" id="GO:0007416">
    <property type="term" value="P:synapse assembly"/>
    <property type="evidence" value="ECO:0000250"/>
    <property type="project" value="BHF-UCL"/>
</dbReference>
<dbReference type="GO" id="GO:0042297">
    <property type="term" value="P:vocal learning"/>
    <property type="evidence" value="ECO:0000266"/>
    <property type="project" value="RGD"/>
</dbReference>
<dbReference type="GO" id="GO:0071625">
    <property type="term" value="P:vocalization behavior"/>
    <property type="evidence" value="ECO:0000266"/>
    <property type="project" value="RGD"/>
</dbReference>
<dbReference type="CDD" id="cd00054">
    <property type="entry name" value="EGF_CA"/>
    <property type="match status" value="1"/>
</dbReference>
<dbReference type="CDD" id="cd00110">
    <property type="entry name" value="LamG"/>
    <property type="match status" value="6"/>
</dbReference>
<dbReference type="FunFam" id="2.10.25.10:FF:000015">
    <property type="entry name" value="neurexin-1 isoform X1"/>
    <property type="match status" value="1"/>
</dbReference>
<dbReference type="FunFam" id="2.10.25.10:FF:000029">
    <property type="entry name" value="neurexin-1 isoform X1"/>
    <property type="match status" value="1"/>
</dbReference>
<dbReference type="FunFam" id="2.60.120.200:FF:000001">
    <property type="entry name" value="neurexin-1 isoform X1"/>
    <property type="match status" value="1"/>
</dbReference>
<dbReference type="FunFam" id="2.60.120.200:FF:000003">
    <property type="entry name" value="neurexin-1 isoform X1"/>
    <property type="match status" value="1"/>
</dbReference>
<dbReference type="FunFam" id="2.60.120.200:FF:000004">
    <property type="entry name" value="neurexin-1 isoform X1"/>
    <property type="match status" value="1"/>
</dbReference>
<dbReference type="FunFam" id="2.60.120.200:FF:000005">
    <property type="entry name" value="neurexin-1 isoform X1"/>
    <property type="match status" value="1"/>
</dbReference>
<dbReference type="FunFam" id="2.60.120.200:FF:000007">
    <property type="entry name" value="neurexin-1 isoform X1"/>
    <property type="match status" value="1"/>
</dbReference>
<dbReference type="FunFam" id="2.60.120.200:FF:000014">
    <property type="entry name" value="neurexin-1 isoform X1"/>
    <property type="match status" value="1"/>
</dbReference>
<dbReference type="FunFam" id="2.10.25.10:FF:000137">
    <property type="entry name" value="neurexin-2-beta isoform X1"/>
    <property type="match status" value="1"/>
</dbReference>
<dbReference type="Gene3D" id="2.60.120.200">
    <property type="match status" value="6"/>
</dbReference>
<dbReference type="Gene3D" id="2.10.25.10">
    <property type="entry name" value="Laminin"/>
    <property type="match status" value="3"/>
</dbReference>
<dbReference type="InterPro" id="IPR013320">
    <property type="entry name" value="ConA-like_dom_sf"/>
</dbReference>
<dbReference type="InterPro" id="IPR000742">
    <property type="entry name" value="EGF-like_dom"/>
</dbReference>
<dbReference type="InterPro" id="IPR001791">
    <property type="entry name" value="Laminin_G"/>
</dbReference>
<dbReference type="InterPro" id="IPR003585">
    <property type="entry name" value="Neurexin-like"/>
</dbReference>
<dbReference type="InterPro" id="IPR050372">
    <property type="entry name" value="Neurexin-related_CASP"/>
</dbReference>
<dbReference type="PANTHER" id="PTHR15036:SF49">
    <property type="entry name" value="AXOTACTIN"/>
    <property type="match status" value="1"/>
</dbReference>
<dbReference type="PANTHER" id="PTHR15036">
    <property type="entry name" value="PIKACHURIN-LIKE PROTEIN"/>
    <property type="match status" value="1"/>
</dbReference>
<dbReference type="Pfam" id="PF02210">
    <property type="entry name" value="Laminin_G_2"/>
    <property type="match status" value="6"/>
</dbReference>
<dbReference type="SMART" id="SM00294">
    <property type="entry name" value="4.1m"/>
    <property type="match status" value="1"/>
</dbReference>
<dbReference type="SMART" id="SM00181">
    <property type="entry name" value="EGF"/>
    <property type="match status" value="3"/>
</dbReference>
<dbReference type="SMART" id="SM00282">
    <property type="entry name" value="LamG"/>
    <property type="match status" value="6"/>
</dbReference>
<dbReference type="SUPFAM" id="SSF49899">
    <property type="entry name" value="Concanavalin A-like lectins/glucanases"/>
    <property type="match status" value="6"/>
</dbReference>
<dbReference type="PROSITE" id="PS50026">
    <property type="entry name" value="EGF_3"/>
    <property type="match status" value="3"/>
</dbReference>
<dbReference type="PROSITE" id="PS50025">
    <property type="entry name" value="LAM_G_DOMAIN"/>
    <property type="match status" value="6"/>
</dbReference>
<protein>
    <recommendedName>
        <fullName>Neurexin-2</fullName>
    </recommendedName>
    <alternativeName>
        <fullName>Neurexin II-alpha</fullName>
    </alternativeName>
    <alternativeName>
        <fullName>Neurexin-2-alpha</fullName>
    </alternativeName>
</protein>
<accession>Q63374</accession>
<accession>Q63375</accession>
<gene>
    <name type="primary">Nrxn2</name>
</gene>
<organism>
    <name type="scientific">Rattus norvegicus</name>
    <name type="common">Rat</name>
    <dbReference type="NCBI Taxonomy" id="10116"/>
    <lineage>
        <taxon>Eukaryota</taxon>
        <taxon>Metazoa</taxon>
        <taxon>Chordata</taxon>
        <taxon>Craniata</taxon>
        <taxon>Vertebrata</taxon>
        <taxon>Euteleostomi</taxon>
        <taxon>Mammalia</taxon>
        <taxon>Eutheria</taxon>
        <taxon>Euarchontoglires</taxon>
        <taxon>Glires</taxon>
        <taxon>Rodentia</taxon>
        <taxon>Myomorpha</taxon>
        <taxon>Muroidea</taxon>
        <taxon>Muridae</taxon>
        <taxon>Murinae</taxon>
        <taxon>Rattus</taxon>
    </lineage>
</organism>
<evidence type="ECO:0000250" key="1">
    <source>
        <dbReference type="UniProtKB" id="E9PUN2"/>
    </source>
</evidence>
<evidence type="ECO:0000250" key="2">
    <source>
        <dbReference type="UniProtKB" id="E9Q7X7"/>
    </source>
</evidence>
<evidence type="ECO:0000250" key="3">
    <source>
        <dbReference type="UniProtKB" id="Q28146"/>
    </source>
</evidence>
<evidence type="ECO:0000250" key="4">
    <source>
        <dbReference type="UniProtKB" id="Q63376"/>
    </source>
</evidence>
<evidence type="ECO:0000250" key="5">
    <source>
        <dbReference type="UniProtKB" id="Q9CS84"/>
    </source>
</evidence>
<evidence type="ECO:0000255" key="6"/>
<evidence type="ECO:0000255" key="7">
    <source>
        <dbReference type="PROSITE-ProRule" id="PRU00076"/>
    </source>
</evidence>
<evidence type="ECO:0000255" key="8">
    <source>
        <dbReference type="PROSITE-ProRule" id="PRU00122"/>
    </source>
</evidence>
<evidence type="ECO:0000256" key="9">
    <source>
        <dbReference type="SAM" id="MobiDB-lite"/>
    </source>
</evidence>
<evidence type="ECO:0000269" key="10">
    <source>
    </source>
</evidence>
<evidence type="ECO:0000269" key="11">
    <source>
    </source>
</evidence>
<evidence type="ECO:0000269" key="12">
    <source>
    </source>
</evidence>
<evidence type="ECO:0000269" key="13">
    <source>
    </source>
</evidence>
<evidence type="ECO:0000269" key="14">
    <source>
    </source>
</evidence>
<evidence type="ECO:0000303" key="15">
    <source>
    </source>
</evidence>
<evidence type="ECO:0000305" key="16"/>
<name>NRX2A_RAT</name>
<comment type="function">
    <text>Neuronal cell surface protein that may be involved in cell recognition and cell adhesion. May mediate intracellular signaling.</text>
</comment>
<comment type="subunit">
    <text evidence="2 4 10 13 14">The laminin G-like domain 1 binds to NXPH1 (PubMed:9856994). Interacts with PATJ (PubMed:9647694). Interacts with CBLN1, CBLN2 and, less avidly, with CBLN4 (By similarity). Specific isoforms bind neuroligins NLGN1, NLGN2 and NLGN3 (By similarity). Isoform 5c/alpha-2C binds to alpha-dystroglycan (PubMed:11470830). Interacts (via Laminin G-like 1 domain) with IGSF21 (Ig-like 1 domain) in a trans-interaction manner (By similarity). Interacts with CLSTN3 (By similarity).</text>
</comment>
<comment type="subcellular location">
    <subcellularLocation>
        <location evidence="5">Presynaptic cell membrane</location>
        <topology evidence="6">Single-pass type I membrane protein</topology>
    </subcellularLocation>
</comment>
<comment type="alternative products">
    <event type="alternative promoter"/>
    <event type="alternative splicing"/>
    <isoform>
        <id>Q63374-1</id>
        <name>1a</name>
        <name>Alpha-1A2A3A4A5A</name>
        <sequence type="displayed"/>
    </isoform>
    <isoform>
        <id>Q63374-2</id>
        <name>2a</name>
        <name>Alpha-1B</name>
        <sequence type="described" ref="VSP_003509"/>
    </isoform>
    <isoform>
        <id>Q63374-3</id>
        <name>3a</name>
        <name>Alpha-1C</name>
        <sequence type="described" ref="VSP_003510"/>
    </isoform>
    <isoform>
        <id>Q63374-4</id>
        <name>4a</name>
        <name>Alpha-2B</name>
        <sequence type="described" ref="VSP_003512"/>
    </isoform>
    <isoform>
        <id>Q63374-5</id>
        <name>5a</name>
        <name>Alpha-2C</name>
        <sequence type="described" ref="VSP_003511"/>
    </isoform>
    <isoform>
        <id>Q63374-6</id>
        <name>6a</name>
        <name>Alpha-3B</name>
        <sequence type="described" ref="VSP_003514"/>
    </isoform>
    <isoform>
        <id>Q63374-7</id>
        <name>7a</name>
        <name>Alpha-3C</name>
        <sequence type="described" ref="VSP_003513"/>
    </isoform>
    <isoform>
        <id>Q63374-8</id>
        <name>8a</name>
        <name>Alpha-4B</name>
        <sequence type="described" ref="VSP_003515"/>
    </isoform>
    <isoform>
        <id>Q63374-9</id>
        <name>9a</name>
        <name>Alpha-5B</name>
        <sequence type="described" ref="VSP_003516"/>
    </isoform>
    <isoform>
        <id>Q63374-10</id>
        <name>10a</name>
        <name>Alpha-6</name>
        <sequence type="described" ref="VSP_003517"/>
    </isoform>
    <isoform>
        <id>Q63376-1</id>
        <name>1b</name>
        <name>Beta-4A5A</name>
        <sequence type="external"/>
    </isoform>
    <isoform>
        <id>Q63376-2</id>
        <name>2b</name>
        <name>Beta-4A5B</name>
        <sequence type="external"/>
    </isoform>
    <isoform>
        <id>Q63376-3</id>
        <name>3b</name>
        <name>Beta-4B5A</name>
        <sequence type="external"/>
    </isoform>
    <isoform>
        <id>Q63376-4</id>
        <name>4b</name>
        <name>Beta-4B5B</name>
        <sequence type="external"/>
    </isoform>
    <isoform>
        <id>Q63376-5</id>
        <name>5b</name>
        <name>Beta-4A5A6</name>
        <sequence type="external"/>
    </isoform>
    <isoform>
        <id>Q63376-6</id>
        <name>6b</name>
        <name>Beta-4A5B6</name>
        <sequence type="external"/>
    </isoform>
    <isoform>
        <id>Q63376-7</id>
        <name>7b</name>
        <name>Beta-4B5A6</name>
        <sequence type="external"/>
    </isoform>
    <isoform>
        <id>Q63376-8</id>
        <name>8b</name>
        <name>Beta-4B5B6</name>
        <sequence type="external"/>
    </isoform>
    <text evidence="11 12">Two isoform types, alpha-type and beta-type are produced by alternative promoter usage. In addition there are at least five major alternatively spliced sites, each of which may be spliced in up to three different ways. Additional isoforms may derive from a minor cytoplasmic splice site 6. Combinatorial splicing at each of these six sites may lead to the generation of at least 216 isoforms but for simplicity only individual splice events are explicitly described below. Beta-type isoforms share the possibility of alternative splicing at sites 4, 5 and 6. Experimental confirmation may be lacking for some isoforms.</text>
</comment>
<comment type="tissue specificity">
    <text>Brain (neuronal synapse).</text>
</comment>
<comment type="PTM">
    <text evidence="2">O-glycosylated; contains heparan sulfate. Heparan sulfate attachment is required for synapse development by mediating interactions with neuroligins.</text>
</comment>
<comment type="similarity">
    <text evidence="16">Belongs to the neurexin family.</text>
</comment>
<proteinExistence type="evidence at protein level"/>
<feature type="signal peptide" evidence="6">
    <location>
        <begin position="1"/>
        <end position="29"/>
    </location>
</feature>
<feature type="chain" id="PRO_0000019496" description="Neurexin-2">
    <location>
        <begin position="30"/>
        <end position="1715"/>
    </location>
</feature>
<feature type="topological domain" description="Extracellular" evidence="6">
    <location>
        <begin position="30"/>
        <end position="1639"/>
    </location>
</feature>
<feature type="transmembrane region" description="Helical" evidence="6">
    <location>
        <begin position="1640"/>
        <end position="1660"/>
    </location>
</feature>
<feature type="topological domain" description="Cytoplasmic" evidence="6">
    <location>
        <begin position="1661"/>
        <end position="1715"/>
    </location>
</feature>
<feature type="domain" description="Laminin G-like 1" evidence="8">
    <location>
        <begin position="30"/>
        <end position="206"/>
    </location>
</feature>
<feature type="domain" description="EGF-like 1" evidence="7">
    <location>
        <begin position="202"/>
        <end position="242"/>
    </location>
</feature>
<feature type="domain" description="Laminin G-like 2" evidence="8">
    <location>
        <begin position="289"/>
        <end position="486"/>
    </location>
</feature>
<feature type="domain" description="Laminin G-like 3" evidence="8">
    <location>
        <begin position="493"/>
        <end position="686"/>
    </location>
</feature>
<feature type="domain" description="EGF-like 2" evidence="7">
    <location>
        <begin position="690"/>
        <end position="727"/>
    </location>
</feature>
<feature type="domain" description="Laminin G-like 4" evidence="8">
    <location>
        <begin position="732"/>
        <end position="907"/>
    </location>
</feature>
<feature type="domain" description="Laminin G-like 5" evidence="8">
    <location>
        <begin position="921"/>
        <end position="1096"/>
    </location>
</feature>
<feature type="domain" description="EGF-like 3" evidence="7">
    <location>
        <begin position="1099"/>
        <end position="1136"/>
    </location>
</feature>
<feature type="domain" description="Laminin G-like 6" evidence="8">
    <location>
        <begin position="1140"/>
        <end position="1348"/>
    </location>
</feature>
<feature type="region of interest" description="Disordered" evidence="9">
    <location>
        <begin position="1461"/>
        <end position="1511"/>
    </location>
</feature>
<feature type="region of interest" description="Disordered" evidence="9">
    <location>
        <begin position="1529"/>
        <end position="1549"/>
    </location>
</feature>
<feature type="region of interest" description="Disordered" evidence="9">
    <location>
        <begin position="1583"/>
        <end position="1626"/>
    </location>
</feature>
<feature type="region of interest" description="Disordered" evidence="9">
    <location>
        <begin position="1682"/>
        <end position="1715"/>
    </location>
</feature>
<feature type="binding site" evidence="3">
    <location>
        <position position="335"/>
    </location>
    <ligand>
        <name>Ca(2+)</name>
        <dbReference type="ChEBI" id="CHEBI:29108"/>
        <label>1</label>
    </ligand>
</feature>
<feature type="binding site" evidence="3">
    <location>
        <position position="352"/>
    </location>
    <ligand>
        <name>Ca(2+)</name>
        <dbReference type="ChEBI" id="CHEBI:29108"/>
        <label>1</label>
    </ligand>
</feature>
<feature type="binding site" evidence="3">
    <location>
        <position position="420"/>
    </location>
    <ligand>
        <name>Ca(2+)</name>
        <dbReference type="ChEBI" id="CHEBI:29108"/>
        <label>1</label>
    </ligand>
</feature>
<feature type="binding site" evidence="3">
    <location>
        <position position="779"/>
    </location>
    <ligand>
        <name>Ca(2+)</name>
        <dbReference type="ChEBI" id="CHEBI:29108"/>
        <label>2</label>
    </ligand>
</feature>
<feature type="binding site" evidence="3">
    <location>
        <position position="796"/>
    </location>
    <ligand>
        <name>Ca(2+)</name>
        <dbReference type="ChEBI" id="CHEBI:29108"/>
        <label>2</label>
    </ligand>
</feature>
<feature type="binding site" evidence="3">
    <location>
        <position position="857"/>
    </location>
    <ligand>
        <name>Ca(2+)</name>
        <dbReference type="ChEBI" id="CHEBI:29108"/>
        <label>2</label>
    </ligand>
</feature>
<feature type="binding site" evidence="5">
    <location>
        <position position="1192"/>
    </location>
    <ligand>
        <name>Ca(2+)</name>
        <dbReference type="ChEBI" id="CHEBI:29108"/>
        <label>3</label>
    </ligand>
</feature>
<feature type="binding site" evidence="5">
    <location>
        <position position="1209"/>
    </location>
    <ligand>
        <name>Ca(2+)</name>
        <dbReference type="ChEBI" id="CHEBI:29108"/>
        <label>3</label>
    </ligand>
</feature>
<feature type="binding site" evidence="5">
    <location>
        <position position="1291"/>
    </location>
    <ligand>
        <name>Ca(2+)</name>
        <dbReference type="ChEBI" id="CHEBI:29108"/>
        <label>3</label>
    </ligand>
</feature>
<feature type="binding site" evidence="5">
    <location>
        <position position="1293"/>
    </location>
    <ligand>
        <name>Ca(2+)</name>
        <dbReference type="ChEBI" id="CHEBI:29108"/>
        <label>3</label>
    </ligand>
</feature>
<feature type="glycosylation site" description="N-linked (GlcNAc...) asparagine" evidence="6">
    <location>
        <position position="60"/>
    </location>
</feature>
<feature type="glycosylation site" description="N-linked (GlcNAc...) asparagine" evidence="6">
    <location>
        <position position="338"/>
    </location>
</feature>
<feature type="glycosylation site" description="N-linked (GlcNAc...) asparagine" evidence="6">
    <location>
        <position position="844"/>
    </location>
</feature>
<feature type="glycosylation site" description="N-linked (GlcNAc...) asparagine" evidence="6">
    <location>
        <position position="1239"/>
    </location>
</feature>
<feature type="glycosylation site" description="O-linked (Xyl...) (heparan sulfate) serine" evidence="1">
    <location>
        <position position="1403"/>
    </location>
</feature>
<feature type="disulfide bond" evidence="7">
    <location>
        <begin position="206"/>
        <end position="219"/>
    </location>
</feature>
<feature type="disulfide bond" evidence="7">
    <location>
        <begin position="213"/>
        <end position="229"/>
    </location>
</feature>
<feature type="disulfide bond" evidence="7">
    <location>
        <begin position="231"/>
        <end position="241"/>
    </location>
</feature>
<feature type="disulfide bond" evidence="8">
    <location>
        <begin position="450"/>
        <end position="486"/>
    </location>
</feature>
<feature type="disulfide bond" evidence="8">
    <location>
        <begin position="657"/>
        <end position="686"/>
    </location>
</feature>
<feature type="disulfide bond" evidence="7">
    <location>
        <begin position="694"/>
        <end position="705"/>
    </location>
</feature>
<feature type="disulfide bond" evidence="7">
    <location>
        <begin position="699"/>
        <end position="714"/>
    </location>
</feature>
<feature type="disulfide bond" evidence="7">
    <location>
        <begin position="716"/>
        <end position="726"/>
    </location>
</feature>
<feature type="disulfide bond" evidence="8">
    <location>
        <begin position="1068"/>
        <end position="1096"/>
    </location>
</feature>
<feature type="disulfide bond" evidence="7">
    <location>
        <begin position="1103"/>
        <end position="1114"/>
    </location>
</feature>
<feature type="disulfide bond" evidence="7">
    <location>
        <begin position="1108"/>
        <end position="1123"/>
    </location>
</feature>
<feature type="disulfide bond" evidence="7">
    <location>
        <begin position="1125"/>
        <end position="1135"/>
    </location>
</feature>
<feature type="splice variant" id="VSP_003510" description="In isoform 3a." evidence="16">
    <location>
        <begin position="250"/>
        <end position="283"/>
    </location>
</feature>
<feature type="splice variant" id="VSP_003509" description="In isoform 2a." evidence="16">
    <location>
        <begin position="250"/>
        <end position="259"/>
    </location>
</feature>
<feature type="splice variant" id="VSP_003511" description="In isoform 5a." evidence="16">
    <location>
        <begin position="385"/>
        <end position="399"/>
    </location>
</feature>
<feature type="splice variant" id="VSP_003512" description="In isoform 4a." evidence="16">
    <location>
        <begin position="393"/>
        <end position="399"/>
    </location>
</feature>
<feature type="splice variant" id="VSP_003513" description="In isoform 7a." evidence="16">
    <original>DCLRVGCAPS</original>
    <variation>G</variation>
    <location>
        <begin position="797"/>
        <end position="806"/>
    </location>
</feature>
<feature type="splice variant" id="VSP_003514" description="In isoform 6a." evidence="16">
    <location>
        <begin position="807"/>
        <end position="809"/>
    </location>
</feature>
<feature type="splice variant" id="VSP_003515" description="In isoform 8a." evidence="16">
    <location>
        <begin position="1256"/>
        <end position="1285"/>
    </location>
</feature>
<feature type="splice variant" id="VSP_003516" description="In isoform 9a." evidence="16">
    <location>
        <begin position="1421"/>
        <end position="1614"/>
    </location>
</feature>
<feature type="splice variant" id="VSP_003517" description="In isoform 10a." evidence="15">
    <original>DEGSYQVDQSRNYISNSAQSNGAVVKEKAPAAPKTPSKAKKNKDKEYYV</original>
    <variation>CRKSPREEKLLPGSAQGLGLDLAKACCVCRCRATCIAGKPLEERGGGRGEGERQMQIYIKNK</variation>
    <location>
        <begin position="1667"/>
        <end position="1715"/>
    </location>
</feature>
<feature type="sequence variant" evidence="11">
    <original>N</original>
    <variation>L</variation>
    <location>
        <position position="434"/>
    </location>
</feature>
<feature type="sequence conflict" description="In Ref. 1; AAA41706/AAA41707." evidence="16" ref="1">
    <original>G</original>
    <variation>E</variation>
    <location>
        <position position="244"/>
    </location>
</feature>
<feature type="sequence conflict" description="In Ref. 1; AAA41706/AAA41707." evidence="16" ref="1">
    <original>P</original>
    <variation>E</variation>
    <location>
        <position position="259"/>
    </location>
</feature>
<feature type="sequence conflict" description="In Ref. 1; AAA41706/AAA41707." evidence="16" ref="1">
    <original>D</original>
    <variation>N</variation>
    <location>
        <position position="277"/>
    </location>
</feature>
<feature type="sequence conflict" description="In Ref. 1; AAA41706/AAA41707." evidence="16" ref="1">
    <original>F</original>
    <variation>S</variation>
    <location>
        <position position="297"/>
    </location>
</feature>
<feature type="sequence conflict" description="In Ref. 1; AAA41706/AAA41707." evidence="16" ref="1">
    <original>D</original>
    <variation>N</variation>
    <location>
        <position position="335"/>
    </location>
</feature>
<feature type="sequence conflict" description="In Ref. 1; AAA41706/AAA41707." evidence="16" ref="1">
    <original>V</original>
    <variation>I</variation>
    <location>
        <position position="349"/>
    </location>
</feature>
<feature type="sequence conflict" description="In Ref. 1; AAA41706/AAA41707." evidence="16" ref="1">
    <original>G</original>
    <variation>A</variation>
    <location>
        <position position="809"/>
    </location>
</feature>
<feature type="sequence conflict" description="In Ref. 1; AAA41706/AAA41707." evidence="16" ref="1">
    <original>V</original>
    <variation>L</variation>
    <location>
        <position position="829"/>
    </location>
</feature>
<feature type="sequence conflict" description="In Ref. 1; AAA41706/AAA41707." evidence="16" ref="1">
    <original>G</original>
    <variation>S</variation>
    <location>
        <position position="987"/>
    </location>
</feature>
<sequence>MALGSRWRPPPQLPPLLLLLALVAGVRGLEFGGGPGQWARYARWAGAASTGELSFSLRTNATRALLLYLDDGGDCDFLELLLVDGRLRLRFTLSCAEPATLQLDTPVADDRWHMVLLTRDARRTALAVDGEARAAEVRSKRREMQVASDLFVGGIPPDVRLSALTLSTVKYEPPFRGLLANLKLGERPPALLGSQGLRGAAADPLCAPARNPCANGGLCTVLAPGEVGCDCSHTGFGGKFCSEGEHPMEGPAHLTLNSPVGSLLFSEGGAGRGGAGDVHQPTKGKEEFVATFKGNEFFCYDLSHNPIQSSTDEITLAFRTLQRNGLMLHTGKSADYVNLSLKSGAVWLVINLGSGAFEALVEPVNGKFNDNAWHDVRVTRNLRQHAGIGHAMVNKLHYLVTISVDGILTTTGYTQEDYTMLGSDDFFYIGGSPNTADLPGSPVSNNFMGCLKDVVYKNNDFKLELSRLAKEGDPKMKLQGDLSFRCEDVAALDPVTFESPEAFVALPRWSAKRTGSISLDFRTTEPNGLLLFSQGRRAGAGVGSHSSSQRADYFAMELLDGYLYLLLDMGSGGIKLRASSRKVNDGEWCHVDFQRDGRKGSISVNSRSTPFLATGESEVLDLESELYLGGLPEGGRVDLPLPPEVWTAALRAGYVGCVRDLFIDGRSRDLRGLAEAQGAVGVAPFCSRETLKQCASAPCRNGGICREGWNRFVCDCIGTGFLGRVCEREATVLSYDGSMYMKIMLPNAMHTEAEDVSLRFMSQRAYGLMMATTSRESADTLRLELDGGQMKLTVNLDCLRVGCAPSAAGKGPETLFAGHKLNDNEWHTVRVVRRGKSLQLSVDNVTVEGQMAGAHTRLEFHNIETGIMTERRFISVVPSNFIGHLSGLVFNGQPYMDQCKDGDITYCELNARFGLRAIVADPVTFKSRSSYLALATLQAYASMHLFFQFKTTAPDGLLLFNSGNGNDFIVIELVKGYIHYVFDLGNGPSLMKGNSDKPVNDNQWHNVVVSRDPGNVHTLKIDSRTVTQHSNGARNLDLKGELYIGGLSKNMFSNLPKLVASRDGFQGCLASVDLNGRLPDLIADALHRIGQVERGCDGPSTTCTEESCANQGVCLQQWDGFTCDCTMTSYGGPVCNDPGTTYIFGKGGALITYTWPPNDRPSTRMDRLAVGFSTHQRSAVLVRVDSASGLGDYLQLHIDQGTVGVIFNVGTDDITIDEPNAIVSDGKYHVVRFTRSGGNATLQVDSWPVNERYPAGNFDNERLAIARQRIPYRLGRVVDEWLLDKGRQLTIFNSQAAIKIGGRDQGRPFQGQVSGLYYNGLKVLALAAESDPNVRTEGHLRLVGEGPSVLLSAETTATTLLADMATTIMETTTTMATTTTRRGRSPTMRDSTTQNTDDLLVASAECPSDDEDLEECEPSTGGELILPIITEDSLDPPPVATRSPFVPPPPTFYPFLTGVGATQDTLPPPAARRPSSGGPCQAERDDSDCEEPVEASGFASGEVFDSSLPPTDDEDFYTTFPLVTDRTTLLSPRKPAPRPNLRTDGATGAPGVLLAPSAPAPNLPAGKMNHRDPLQPLLENPPLGPGVPTAFEPRRPPPLRPGVTSVPGFPRLPTANPTGPGERGPPGAVEVIRESSSTTGMVVGIVAAAALCILILLYAMYKYRNRDEGSYQVDQSRNYISNSAQSNGAVVKEKAPAAPKTPSKAKKNKDKEYYV</sequence>
<keyword id="KW-0877">Alternative promoter usage</keyword>
<keyword id="KW-0025">Alternative splicing</keyword>
<keyword id="KW-0106">Calcium</keyword>
<keyword id="KW-0130">Cell adhesion</keyword>
<keyword id="KW-1003">Cell membrane</keyword>
<keyword id="KW-0966">Cell projection</keyword>
<keyword id="KW-1015">Disulfide bond</keyword>
<keyword id="KW-0245">EGF-like domain</keyword>
<keyword id="KW-0325">Glycoprotein</keyword>
<keyword id="KW-0357">Heparan sulfate</keyword>
<keyword id="KW-0472">Membrane</keyword>
<keyword id="KW-0479">Metal-binding</keyword>
<keyword id="KW-0654">Proteoglycan</keyword>
<keyword id="KW-1185">Reference proteome</keyword>
<keyword id="KW-0677">Repeat</keyword>
<keyword id="KW-0732">Signal</keyword>
<keyword id="KW-0770">Synapse</keyword>
<keyword id="KW-0812">Transmembrane</keyword>
<keyword id="KW-1133">Transmembrane helix</keyword>